<proteinExistence type="inferred from homology"/>
<name>FMT_RHOPB</name>
<dbReference type="EC" id="2.1.2.9" evidence="1"/>
<dbReference type="EMBL" id="CP000301">
    <property type="protein sequence ID" value="ABD86377.1"/>
    <property type="molecule type" value="Genomic_DNA"/>
</dbReference>
<dbReference type="SMR" id="Q21B59"/>
<dbReference type="STRING" id="316056.RPC_0806"/>
<dbReference type="KEGG" id="rpc:RPC_0806"/>
<dbReference type="eggNOG" id="COG0223">
    <property type="taxonomic scope" value="Bacteria"/>
</dbReference>
<dbReference type="HOGENOM" id="CLU_033347_1_2_5"/>
<dbReference type="OrthoDB" id="9802815at2"/>
<dbReference type="GO" id="GO:0005829">
    <property type="term" value="C:cytosol"/>
    <property type="evidence" value="ECO:0007669"/>
    <property type="project" value="TreeGrafter"/>
</dbReference>
<dbReference type="GO" id="GO:0004479">
    <property type="term" value="F:methionyl-tRNA formyltransferase activity"/>
    <property type="evidence" value="ECO:0007669"/>
    <property type="project" value="UniProtKB-UniRule"/>
</dbReference>
<dbReference type="CDD" id="cd08646">
    <property type="entry name" value="FMT_core_Met-tRNA-FMT_N"/>
    <property type="match status" value="1"/>
</dbReference>
<dbReference type="CDD" id="cd08704">
    <property type="entry name" value="Met_tRNA_FMT_C"/>
    <property type="match status" value="1"/>
</dbReference>
<dbReference type="Gene3D" id="3.10.25.10">
    <property type="entry name" value="Formyl transferase, C-terminal domain"/>
    <property type="match status" value="1"/>
</dbReference>
<dbReference type="Gene3D" id="3.40.50.170">
    <property type="entry name" value="Formyl transferase, N-terminal domain"/>
    <property type="match status" value="1"/>
</dbReference>
<dbReference type="HAMAP" id="MF_00182">
    <property type="entry name" value="Formyl_trans"/>
    <property type="match status" value="1"/>
</dbReference>
<dbReference type="InterPro" id="IPR005794">
    <property type="entry name" value="Fmt"/>
</dbReference>
<dbReference type="InterPro" id="IPR005793">
    <property type="entry name" value="Formyl_trans_C"/>
</dbReference>
<dbReference type="InterPro" id="IPR037022">
    <property type="entry name" value="Formyl_trans_C_sf"/>
</dbReference>
<dbReference type="InterPro" id="IPR002376">
    <property type="entry name" value="Formyl_transf_N"/>
</dbReference>
<dbReference type="InterPro" id="IPR036477">
    <property type="entry name" value="Formyl_transf_N_sf"/>
</dbReference>
<dbReference type="InterPro" id="IPR011034">
    <property type="entry name" value="Formyl_transferase-like_C_sf"/>
</dbReference>
<dbReference type="InterPro" id="IPR001555">
    <property type="entry name" value="GART_AS"/>
</dbReference>
<dbReference type="InterPro" id="IPR044135">
    <property type="entry name" value="Met-tRNA-FMT_C"/>
</dbReference>
<dbReference type="InterPro" id="IPR041711">
    <property type="entry name" value="Met-tRNA-FMT_N"/>
</dbReference>
<dbReference type="NCBIfam" id="TIGR00460">
    <property type="entry name" value="fmt"/>
    <property type="match status" value="1"/>
</dbReference>
<dbReference type="PANTHER" id="PTHR11138">
    <property type="entry name" value="METHIONYL-TRNA FORMYLTRANSFERASE"/>
    <property type="match status" value="1"/>
</dbReference>
<dbReference type="PANTHER" id="PTHR11138:SF5">
    <property type="entry name" value="METHIONYL-TRNA FORMYLTRANSFERASE, MITOCHONDRIAL"/>
    <property type="match status" value="1"/>
</dbReference>
<dbReference type="Pfam" id="PF02911">
    <property type="entry name" value="Formyl_trans_C"/>
    <property type="match status" value="1"/>
</dbReference>
<dbReference type="Pfam" id="PF00551">
    <property type="entry name" value="Formyl_trans_N"/>
    <property type="match status" value="1"/>
</dbReference>
<dbReference type="SUPFAM" id="SSF50486">
    <property type="entry name" value="FMT C-terminal domain-like"/>
    <property type="match status" value="1"/>
</dbReference>
<dbReference type="SUPFAM" id="SSF53328">
    <property type="entry name" value="Formyltransferase"/>
    <property type="match status" value="1"/>
</dbReference>
<dbReference type="PROSITE" id="PS00373">
    <property type="entry name" value="GART"/>
    <property type="match status" value="1"/>
</dbReference>
<accession>Q21B59</accession>
<organism>
    <name type="scientific">Rhodopseudomonas palustris (strain BisB18)</name>
    <dbReference type="NCBI Taxonomy" id="316056"/>
    <lineage>
        <taxon>Bacteria</taxon>
        <taxon>Pseudomonadati</taxon>
        <taxon>Pseudomonadota</taxon>
        <taxon>Alphaproteobacteria</taxon>
        <taxon>Hyphomicrobiales</taxon>
        <taxon>Nitrobacteraceae</taxon>
        <taxon>Rhodopseudomonas</taxon>
    </lineage>
</organism>
<gene>
    <name evidence="1" type="primary">fmt</name>
    <name type="ordered locus">RPC_0806</name>
</gene>
<keyword id="KW-0648">Protein biosynthesis</keyword>
<keyword id="KW-0808">Transferase</keyword>
<feature type="chain" id="PRO_1000020142" description="Methionyl-tRNA formyltransferase">
    <location>
        <begin position="1"/>
        <end position="310"/>
    </location>
</feature>
<feature type="binding site" evidence="1">
    <location>
        <begin position="111"/>
        <end position="114"/>
    </location>
    <ligand>
        <name>(6S)-5,6,7,8-tetrahydrofolate</name>
        <dbReference type="ChEBI" id="CHEBI:57453"/>
    </ligand>
</feature>
<protein>
    <recommendedName>
        <fullName evidence="1">Methionyl-tRNA formyltransferase</fullName>
        <ecNumber evidence="1">2.1.2.9</ecNumber>
    </recommendedName>
</protein>
<reference key="1">
    <citation type="submission" date="2006-03" db="EMBL/GenBank/DDBJ databases">
        <title>Complete sequence of Rhodopseudomonas palustris BisB18.</title>
        <authorList>
            <consortium name="US DOE Joint Genome Institute"/>
            <person name="Copeland A."/>
            <person name="Lucas S."/>
            <person name="Lapidus A."/>
            <person name="Barry K."/>
            <person name="Detter J.C."/>
            <person name="Glavina del Rio T."/>
            <person name="Hammon N."/>
            <person name="Israni S."/>
            <person name="Dalin E."/>
            <person name="Tice H."/>
            <person name="Pitluck S."/>
            <person name="Chain P."/>
            <person name="Malfatti S."/>
            <person name="Shin M."/>
            <person name="Vergez L."/>
            <person name="Schmutz J."/>
            <person name="Larimer F."/>
            <person name="Land M."/>
            <person name="Hauser L."/>
            <person name="Pelletier D.A."/>
            <person name="Kyrpides N."/>
            <person name="Anderson I."/>
            <person name="Oda Y."/>
            <person name="Harwood C.S."/>
            <person name="Richardson P."/>
        </authorList>
    </citation>
    <scope>NUCLEOTIDE SEQUENCE [LARGE SCALE GENOMIC DNA]</scope>
    <source>
        <strain>BisB18</strain>
    </source>
</reference>
<comment type="function">
    <text evidence="1">Attaches a formyl group to the free amino group of methionyl-tRNA(fMet). The formyl group appears to play a dual role in the initiator identity of N-formylmethionyl-tRNA by promoting its recognition by IF2 and preventing the misappropriation of this tRNA by the elongation apparatus.</text>
</comment>
<comment type="catalytic activity">
    <reaction evidence="1">
        <text>L-methionyl-tRNA(fMet) + (6R)-10-formyltetrahydrofolate = N-formyl-L-methionyl-tRNA(fMet) + (6S)-5,6,7,8-tetrahydrofolate + H(+)</text>
        <dbReference type="Rhea" id="RHEA:24380"/>
        <dbReference type="Rhea" id="RHEA-COMP:9952"/>
        <dbReference type="Rhea" id="RHEA-COMP:9953"/>
        <dbReference type="ChEBI" id="CHEBI:15378"/>
        <dbReference type="ChEBI" id="CHEBI:57453"/>
        <dbReference type="ChEBI" id="CHEBI:78530"/>
        <dbReference type="ChEBI" id="CHEBI:78844"/>
        <dbReference type="ChEBI" id="CHEBI:195366"/>
        <dbReference type="EC" id="2.1.2.9"/>
    </reaction>
</comment>
<comment type="similarity">
    <text evidence="1">Belongs to the Fmt family.</text>
</comment>
<evidence type="ECO:0000255" key="1">
    <source>
        <dbReference type="HAMAP-Rule" id="MF_00182"/>
    </source>
</evidence>
<sequence length="310" mass="33028">MPLRLIFMGTPDFAVPTLRTLAAAGHQIVAVYSREAKPSGRGMKLQPTPVAQEAERLGIPVLTPKTLRTPEAAAEFAAFQADAAVVVAYGMILPQPILDAPTFGCFNLHGSLLPRWRGAAPINRAIMAGDPEAGVMVMKMDIGLDTGDVALTGRIALTDAMTASDLHDALAPLGAELMVEAMAQLERGELTFTKQPEQGVTYAAKIDKAEARIDWAKPAHAVLRHIHGLSPFPGAWCELPIEGEAVRVKILRCELAKGSGEPGTLLDDRLAIACGDGAIRILQLQRAGKQPMQAQDFLRGTPLQPPLAVC</sequence>